<comment type="function">
    <text evidence="1">Uptake of L-rhamnose across the cytoplasmic membrane with the concomitant transport of protons into the cell (symport system).</text>
</comment>
<comment type="catalytic activity">
    <reaction evidence="1">
        <text>L-rhamnopyranose(in) + H(+)(in) = L-rhamnopyranose(out) + H(+)(out)</text>
        <dbReference type="Rhea" id="RHEA:29947"/>
        <dbReference type="ChEBI" id="CHEBI:15378"/>
        <dbReference type="ChEBI" id="CHEBI:62346"/>
    </reaction>
    <physiologicalReaction direction="right-to-left" evidence="1">
        <dbReference type="Rhea" id="RHEA:29949"/>
    </physiologicalReaction>
</comment>
<comment type="subcellular location">
    <subcellularLocation>
        <location evidence="1">Cell inner membrane</location>
        <topology evidence="1">Multi-pass membrane protein</topology>
    </subcellularLocation>
</comment>
<comment type="similarity">
    <text evidence="1">Belongs to the L-rhamnose transporter (TC 2.A.7.6) family.</text>
</comment>
<sequence>MSNAITMGIFWHLIGAASAACFYAPFKKVKKWSWETMWSVGGIVSWIILPWAISALLLPNFWAYYSSFSLSTLLPVFLFGAMWGIGNINYGLTMRYLGMSMGIGIAIGITLIVGTLMTPIINGNFDVLINTEGGRMTLLGVLVALIGVGIVTRAGQLKERKMGIKAEEFNLKKGLVLAVMCGIFSAGMSFAMNAAKPMHEAAAALGVDPLYVALPSYVVIMGGGAIINLGFCFIRLAKVKDLSLKADFSLAKPLIIHNVLLSALGGLMWYLQFFFYAWGHARIPAQYDYISWMLHMSFYVLCGGIVGLVLKEWNNAGRRPVTVLSLGCVVIIVAANIVGIGMAN</sequence>
<proteinExistence type="inferred from homology"/>
<feature type="chain" id="PRO_0000292765" description="L-rhamnose-proton symporter">
    <location>
        <begin position="1"/>
        <end position="344"/>
    </location>
</feature>
<feature type="transmembrane region" description="Helical" evidence="1">
    <location>
        <begin position="4"/>
        <end position="24"/>
    </location>
</feature>
<feature type="transmembrane region" description="Helical" evidence="1">
    <location>
        <begin position="38"/>
        <end position="58"/>
    </location>
</feature>
<feature type="transmembrane region" description="Helical" evidence="1">
    <location>
        <begin position="68"/>
        <end position="88"/>
    </location>
</feature>
<feature type="transmembrane region" description="Helical" evidence="1">
    <location>
        <begin position="101"/>
        <end position="121"/>
    </location>
</feature>
<feature type="transmembrane region" description="Helical" evidence="1">
    <location>
        <begin position="137"/>
        <end position="157"/>
    </location>
</feature>
<feature type="transmembrane region" description="Helical" evidence="1">
    <location>
        <begin position="175"/>
        <end position="195"/>
    </location>
</feature>
<feature type="transmembrane region" description="Helical" evidence="1">
    <location>
        <begin position="214"/>
        <end position="234"/>
    </location>
</feature>
<feature type="transmembrane region" description="Helical" evidence="1">
    <location>
        <begin position="259"/>
        <end position="279"/>
    </location>
</feature>
<feature type="transmembrane region" description="Helical" evidence="1">
    <location>
        <begin position="290"/>
        <end position="310"/>
    </location>
</feature>
<feature type="transmembrane region" description="Helical" evidence="1">
    <location>
        <begin position="323"/>
        <end position="343"/>
    </location>
</feature>
<organism>
    <name type="scientific">Escherichia coli O6:K15:H31 (strain 536 / UPEC)</name>
    <dbReference type="NCBI Taxonomy" id="362663"/>
    <lineage>
        <taxon>Bacteria</taxon>
        <taxon>Pseudomonadati</taxon>
        <taxon>Pseudomonadota</taxon>
        <taxon>Gammaproteobacteria</taxon>
        <taxon>Enterobacterales</taxon>
        <taxon>Enterobacteriaceae</taxon>
        <taxon>Escherichia</taxon>
    </lineage>
</organism>
<protein>
    <recommendedName>
        <fullName evidence="1">L-rhamnose-proton symporter</fullName>
    </recommendedName>
    <alternativeName>
        <fullName evidence="1">L-rhamnose-H(+) transport protein</fullName>
    </alternativeName>
</protein>
<accession>Q0TAF6</accession>
<keyword id="KW-0997">Cell inner membrane</keyword>
<keyword id="KW-1003">Cell membrane</keyword>
<keyword id="KW-0472">Membrane</keyword>
<keyword id="KW-0762">Sugar transport</keyword>
<keyword id="KW-0769">Symport</keyword>
<keyword id="KW-0812">Transmembrane</keyword>
<keyword id="KW-1133">Transmembrane helix</keyword>
<keyword id="KW-0813">Transport</keyword>
<gene>
    <name evidence="1" type="primary">rhaT</name>
    <name type="ordered locus">ECP_4117</name>
</gene>
<dbReference type="EMBL" id="CP000247">
    <property type="protein sequence ID" value="ABG72073.1"/>
    <property type="molecule type" value="Genomic_DNA"/>
</dbReference>
<dbReference type="RefSeq" id="WP_000063507.1">
    <property type="nucleotide sequence ID" value="NC_008253.1"/>
</dbReference>
<dbReference type="GeneID" id="75174148"/>
<dbReference type="KEGG" id="ecp:ECP_4117"/>
<dbReference type="HOGENOM" id="CLU_066437_0_0_6"/>
<dbReference type="Proteomes" id="UP000009182">
    <property type="component" value="Chromosome"/>
</dbReference>
<dbReference type="GO" id="GO:0005886">
    <property type="term" value="C:plasma membrane"/>
    <property type="evidence" value="ECO:0007669"/>
    <property type="project" value="UniProtKB-SubCell"/>
</dbReference>
<dbReference type="GO" id="GO:0015153">
    <property type="term" value="F:rhamnose transmembrane transporter activity"/>
    <property type="evidence" value="ECO:0007669"/>
    <property type="project" value="UniProtKB-UniRule"/>
</dbReference>
<dbReference type="GO" id="GO:0015293">
    <property type="term" value="F:symporter activity"/>
    <property type="evidence" value="ECO:0007669"/>
    <property type="project" value="UniProtKB-KW"/>
</dbReference>
<dbReference type="HAMAP" id="MF_01532">
    <property type="entry name" value="RhaT"/>
    <property type="match status" value="1"/>
</dbReference>
<dbReference type="InterPro" id="IPR004673">
    <property type="entry name" value="L-rhamnose-proton_sym_RhaT"/>
</dbReference>
<dbReference type="NCBIfam" id="NF010021">
    <property type="entry name" value="PRK13499.1-1"/>
    <property type="match status" value="1"/>
</dbReference>
<dbReference type="NCBIfam" id="NF010023">
    <property type="entry name" value="PRK13499.1-3"/>
    <property type="match status" value="1"/>
</dbReference>
<dbReference type="NCBIfam" id="TIGR00776">
    <property type="entry name" value="RhaT"/>
    <property type="match status" value="1"/>
</dbReference>
<dbReference type="Pfam" id="PF06379">
    <property type="entry name" value="RhaT"/>
    <property type="match status" value="1"/>
</dbReference>
<reference key="1">
    <citation type="journal article" date="2006" name="Mol. Microbiol.">
        <title>Role of pathogenicity island-associated integrases in the genome plasticity of uropathogenic Escherichia coli strain 536.</title>
        <authorList>
            <person name="Hochhut B."/>
            <person name="Wilde C."/>
            <person name="Balling G."/>
            <person name="Middendorf B."/>
            <person name="Dobrindt U."/>
            <person name="Brzuszkiewicz E."/>
            <person name="Gottschalk G."/>
            <person name="Carniel E."/>
            <person name="Hacker J."/>
        </authorList>
    </citation>
    <scope>NUCLEOTIDE SEQUENCE [LARGE SCALE GENOMIC DNA]</scope>
    <source>
        <strain>536 / UPEC</strain>
    </source>
</reference>
<name>RHAT_ECOL5</name>
<evidence type="ECO:0000255" key="1">
    <source>
        <dbReference type="HAMAP-Rule" id="MF_01532"/>
    </source>
</evidence>